<dbReference type="EC" id="3.6.4.-" evidence="1"/>
<dbReference type="EMBL" id="CP000891">
    <property type="protein sequence ID" value="ABX49587.1"/>
    <property type="molecule type" value="Genomic_DNA"/>
</dbReference>
<dbReference type="RefSeq" id="WP_006086781.1">
    <property type="nucleotide sequence ID" value="NC_009997.1"/>
</dbReference>
<dbReference type="SMR" id="A9L3H7"/>
<dbReference type="GeneID" id="11772536"/>
<dbReference type="KEGG" id="sbn:Sbal195_2419"/>
<dbReference type="HOGENOM" id="CLU_055599_1_0_6"/>
<dbReference type="Proteomes" id="UP000000770">
    <property type="component" value="Chromosome"/>
</dbReference>
<dbReference type="GO" id="GO:0005737">
    <property type="term" value="C:cytoplasm"/>
    <property type="evidence" value="ECO:0007669"/>
    <property type="project" value="UniProtKB-SubCell"/>
</dbReference>
<dbReference type="GO" id="GO:0048476">
    <property type="term" value="C:Holliday junction resolvase complex"/>
    <property type="evidence" value="ECO:0007669"/>
    <property type="project" value="UniProtKB-UniRule"/>
</dbReference>
<dbReference type="GO" id="GO:0005524">
    <property type="term" value="F:ATP binding"/>
    <property type="evidence" value="ECO:0007669"/>
    <property type="project" value="UniProtKB-UniRule"/>
</dbReference>
<dbReference type="GO" id="GO:0016887">
    <property type="term" value="F:ATP hydrolysis activity"/>
    <property type="evidence" value="ECO:0007669"/>
    <property type="project" value="InterPro"/>
</dbReference>
<dbReference type="GO" id="GO:0000400">
    <property type="term" value="F:four-way junction DNA binding"/>
    <property type="evidence" value="ECO:0007669"/>
    <property type="project" value="UniProtKB-UniRule"/>
</dbReference>
<dbReference type="GO" id="GO:0009378">
    <property type="term" value="F:four-way junction helicase activity"/>
    <property type="evidence" value="ECO:0007669"/>
    <property type="project" value="InterPro"/>
</dbReference>
<dbReference type="GO" id="GO:0006310">
    <property type="term" value="P:DNA recombination"/>
    <property type="evidence" value="ECO:0007669"/>
    <property type="project" value="UniProtKB-UniRule"/>
</dbReference>
<dbReference type="GO" id="GO:0006281">
    <property type="term" value="P:DNA repair"/>
    <property type="evidence" value="ECO:0007669"/>
    <property type="project" value="UniProtKB-UniRule"/>
</dbReference>
<dbReference type="CDD" id="cd00009">
    <property type="entry name" value="AAA"/>
    <property type="match status" value="1"/>
</dbReference>
<dbReference type="FunFam" id="1.10.10.10:FF:000086">
    <property type="entry name" value="Holliday junction ATP-dependent DNA helicase RuvB"/>
    <property type="match status" value="1"/>
</dbReference>
<dbReference type="FunFam" id="1.10.8.60:FF:000023">
    <property type="entry name" value="Holliday junction ATP-dependent DNA helicase RuvB"/>
    <property type="match status" value="1"/>
</dbReference>
<dbReference type="FunFam" id="3.40.50.300:FF:000073">
    <property type="entry name" value="Holliday junction ATP-dependent DNA helicase RuvB"/>
    <property type="match status" value="1"/>
</dbReference>
<dbReference type="Gene3D" id="1.10.8.60">
    <property type="match status" value="1"/>
</dbReference>
<dbReference type="Gene3D" id="3.40.50.300">
    <property type="entry name" value="P-loop containing nucleotide triphosphate hydrolases"/>
    <property type="match status" value="1"/>
</dbReference>
<dbReference type="Gene3D" id="1.10.10.10">
    <property type="entry name" value="Winged helix-like DNA-binding domain superfamily/Winged helix DNA-binding domain"/>
    <property type="match status" value="1"/>
</dbReference>
<dbReference type="HAMAP" id="MF_00016">
    <property type="entry name" value="DNA_HJ_migration_RuvB"/>
    <property type="match status" value="1"/>
</dbReference>
<dbReference type="InterPro" id="IPR003593">
    <property type="entry name" value="AAA+_ATPase"/>
</dbReference>
<dbReference type="InterPro" id="IPR041445">
    <property type="entry name" value="AAA_lid_4"/>
</dbReference>
<dbReference type="InterPro" id="IPR004605">
    <property type="entry name" value="DNA_helicase_Holl-junc_RuvB"/>
</dbReference>
<dbReference type="InterPro" id="IPR027417">
    <property type="entry name" value="P-loop_NTPase"/>
</dbReference>
<dbReference type="InterPro" id="IPR008824">
    <property type="entry name" value="RuvB-like_N"/>
</dbReference>
<dbReference type="InterPro" id="IPR008823">
    <property type="entry name" value="RuvB_C"/>
</dbReference>
<dbReference type="InterPro" id="IPR036388">
    <property type="entry name" value="WH-like_DNA-bd_sf"/>
</dbReference>
<dbReference type="InterPro" id="IPR036390">
    <property type="entry name" value="WH_DNA-bd_sf"/>
</dbReference>
<dbReference type="NCBIfam" id="NF000868">
    <property type="entry name" value="PRK00080.1"/>
    <property type="match status" value="1"/>
</dbReference>
<dbReference type="NCBIfam" id="TIGR00635">
    <property type="entry name" value="ruvB"/>
    <property type="match status" value="1"/>
</dbReference>
<dbReference type="PANTHER" id="PTHR42848">
    <property type="match status" value="1"/>
</dbReference>
<dbReference type="PANTHER" id="PTHR42848:SF1">
    <property type="entry name" value="HOLLIDAY JUNCTION BRANCH MIGRATION COMPLEX SUBUNIT RUVB"/>
    <property type="match status" value="1"/>
</dbReference>
<dbReference type="Pfam" id="PF17864">
    <property type="entry name" value="AAA_lid_4"/>
    <property type="match status" value="1"/>
</dbReference>
<dbReference type="Pfam" id="PF05491">
    <property type="entry name" value="RuvB_C"/>
    <property type="match status" value="1"/>
</dbReference>
<dbReference type="Pfam" id="PF05496">
    <property type="entry name" value="RuvB_N"/>
    <property type="match status" value="1"/>
</dbReference>
<dbReference type="SMART" id="SM00382">
    <property type="entry name" value="AAA"/>
    <property type="match status" value="1"/>
</dbReference>
<dbReference type="SUPFAM" id="SSF52540">
    <property type="entry name" value="P-loop containing nucleoside triphosphate hydrolases"/>
    <property type="match status" value="1"/>
</dbReference>
<dbReference type="SUPFAM" id="SSF46785">
    <property type="entry name" value="Winged helix' DNA-binding domain"/>
    <property type="match status" value="1"/>
</dbReference>
<gene>
    <name evidence="1" type="primary">ruvB</name>
    <name type="ordered locus">Sbal195_2419</name>
</gene>
<keyword id="KW-0067">ATP-binding</keyword>
<keyword id="KW-0963">Cytoplasm</keyword>
<keyword id="KW-0227">DNA damage</keyword>
<keyword id="KW-0233">DNA recombination</keyword>
<keyword id="KW-0234">DNA repair</keyword>
<keyword id="KW-0238">DNA-binding</keyword>
<keyword id="KW-0378">Hydrolase</keyword>
<keyword id="KW-0547">Nucleotide-binding</keyword>
<proteinExistence type="inferred from homology"/>
<name>RUVB_SHEB9</name>
<protein>
    <recommendedName>
        <fullName evidence="1">Holliday junction branch migration complex subunit RuvB</fullName>
        <ecNumber evidence="1">3.6.4.-</ecNumber>
    </recommendedName>
</protein>
<organism>
    <name type="scientific">Shewanella baltica (strain OS195)</name>
    <dbReference type="NCBI Taxonomy" id="399599"/>
    <lineage>
        <taxon>Bacteria</taxon>
        <taxon>Pseudomonadati</taxon>
        <taxon>Pseudomonadota</taxon>
        <taxon>Gammaproteobacteria</taxon>
        <taxon>Alteromonadales</taxon>
        <taxon>Shewanellaceae</taxon>
        <taxon>Shewanella</taxon>
    </lineage>
</organism>
<comment type="function">
    <text evidence="1">The RuvA-RuvB-RuvC complex processes Holliday junction (HJ) DNA during genetic recombination and DNA repair, while the RuvA-RuvB complex plays an important role in the rescue of blocked DNA replication forks via replication fork reversal (RFR). RuvA specifically binds to HJ cruciform DNA, conferring on it an open structure. The RuvB hexamer acts as an ATP-dependent pump, pulling dsDNA into and through the RuvAB complex. RuvB forms 2 homohexamers on either side of HJ DNA bound by 1 or 2 RuvA tetramers; 4 subunits per hexamer contact DNA at a time. Coordinated motions by a converter formed by DNA-disengaged RuvB subunits stimulates ATP hydrolysis and nucleotide exchange. Immobilization of the converter enables RuvB to convert the ATP-contained energy into a lever motion, pulling 2 nucleotides of DNA out of the RuvA tetramer per ATP hydrolyzed, thus driving DNA branch migration. The RuvB motors rotate together with the DNA substrate, which together with the progressing nucleotide cycle form the mechanistic basis for DNA recombination by continuous HJ branch migration. Branch migration allows RuvC to scan DNA until it finds its consensus sequence, where it cleaves and resolves cruciform DNA.</text>
</comment>
<comment type="catalytic activity">
    <reaction evidence="1">
        <text>ATP + H2O = ADP + phosphate + H(+)</text>
        <dbReference type="Rhea" id="RHEA:13065"/>
        <dbReference type="ChEBI" id="CHEBI:15377"/>
        <dbReference type="ChEBI" id="CHEBI:15378"/>
        <dbReference type="ChEBI" id="CHEBI:30616"/>
        <dbReference type="ChEBI" id="CHEBI:43474"/>
        <dbReference type="ChEBI" id="CHEBI:456216"/>
    </reaction>
</comment>
<comment type="subunit">
    <text evidence="1">Homohexamer. Forms an RuvA(8)-RuvB(12)-Holliday junction (HJ) complex. HJ DNA is sandwiched between 2 RuvA tetramers; dsDNA enters through RuvA and exits via RuvB. An RuvB hexamer assembles on each DNA strand where it exits the tetramer. Each RuvB hexamer is contacted by two RuvA subunits (via domain III) on 2 adjacent RuvB subunits; this complex drives branch migration. In the full resolvosome a probable DNA-RuvA(4)-RuvB(12)-RuvC(2) complex forms which resolves the HJ.</text>
</comment>
<comment type="subcellular location">
    <subcellularLocation>
        <location evidence="1">Cytoplasm</location>
    </subcellularLocation>
</comment>
<comment type="domain">
    <text evidence="1">Has 3 domains, the large (RuvB-L) and small ATPase (RuvB-S) domains and the C-terminal head (RuvB-H) domain. The head domain binds DNA, while the ATPase domains jointly bind ATP, ADP or are empty depending on the state of the subunit in the translocation cycle. During a single DNA translocation step the structure of each domain remains the same, but their relative positions change.</text>
</comment>
<comment type="similarity">
    <text evidence="1">Belongs to the RuvB family.</text>
</comment>
<feature type="chain" id="PRO_1000074100" description="Holliday junction branch migration complex subunit RuvB">
    <location>
        <begin position="1"/>
        <end position="334"/>
    </location>
</feature>
<feature type="region of interest" description="Large ATPase domain (RuvB-L)" evidence="1">
    <location>
        <begin position="4"/>
        <end position="184"/>
    </location>
</feature>
<feature type="region of interest" description="Small ATPAse domain (RuvB-S)" evidence="1">
    <location>
        <begin position="185"/>
        <end position="255"/>
    </location>
</feature>
<feature type="region of interest" description="Head domain (RuvB-H)" evidence="1">
    <location>
        <begin position="258"/>
        <end position="334"/>
    </location>
</feature>
<feature type="binding site" evidence="1">
    <location>
        <position position="24"/>
    </location>
    <ligand>
        <name>ATP</name>
        <dbReference type="ChEBI" id="CHEBI:30616"/>
    </ligand>
</feature>
<feature type="binding site" evidence="1">
    <location>
        <position position="65"/>
    </location>
    <ligand>
        <name>ATP</name>
        <dbReference type="ChEBI" id="CHEBI:30616"/>
    </ligand>
</feature>
<feature type="binding site" evidence="1">
    <location>
        <position position="68"/>
    </location>
    <ligand>
        <name>ATP</name>
        <dbReference type="ChEBI" id="CHEBI:30616"/>
    </ligand>
</feature>
<feature type="binding site" evidence="1">
    <location>
        <position position="69"/>
    </location>
    <ligand>
        <name>ATP</name>
        <dbReference type="ChEBI" id="CHEBI:30616"/>
    </ligand>
</feature>
<feature type="binding site" evidence="1">
    <location>
        <position position="69"/>
    </location>
    <ligand>
        <name>Mg(2+)</name>
        <dbReference type="ChEBI" id="CHEBI:18420"/>
    </ligand>
</feature>
<feature type="binding site" evidence="1">
    <location>
        <position position="70"/>
    </location>
    <ligand>
        <name>ATP</name>
        <dbReference type="ChEBI" id="CHEBI:30616"/>
    </ligand>
</feature>
<feature type="binding site" evidence="1">
    <location>
        <begin position="131"/>
        <end position="133"/>
    </location>
    <ligand>
        <name>ATP</name>
        <dbReference type="ChEBI" id="CHEBI:30616"/>
    </ligand>
</feature>
<feature type="binding site" evidence="1">
    <location>
        <position position="174"/>
    </location>
    <ligand>
        <name>ATP</name>
        <dbReference type="ChEBI" id="CHEBI:30616"/>
    </ligand>
</feature>
<feature type="binding site" evidence="1">
    <location>
        <position position="184"/>
    </location>
    <ligand>
        <name>ATP</name>
        <dbReference type="ChEBI" id="CHEBI:30616"/>
    </ligand>
</feature>
<feature type="binding site" evidence="1">
    <location>
        <position position="221"/>
    </location>
    <ligand>
        <name>ATP</name>
        <dbReference type="ChEBI" id="CHEBI:30616"/>
    </ligand>
</feature>
<feature type="binding site" evidence="1">
    <location>
        <position position="294"/>
    </location>
    <ligand>
        <name>DNA</name>
        <dbReference type="ChEBI" id="CHEBI:16991"/>
    </ligand>
</feature>
<feature type="binding site" evidence="1">
    <location>
        <position position="313"/>
    </location>
    <ligand>
        <name>DNA</name>
        <dbReference type="ChEBI" id="CHEBI:16991"/>
    </ligand>
</feature>
<feature type="binding site" evidence="1">
    <location>
        <position position="318"/>
    </location>
    <ligand>
        <name>DNA</name>
        <dbReference type="ChEBI" id="CHEBI:16991"/>
    </ligand>
</feature>
<reference key="1">
    <citation type="submission" date="2007-11" db="EMBL/GenBank/DDBJ databases">
        <title>Complete sequence of chromosome of Shewanella baltica OS195.</title>
        <authorList>
            <consortium name="US DOE Joint Genome Institute"/>
            <person name="Copeland A."/>
            <person name="Lucas S."/>
            <person name="Lapidus A."/>
            <person name="Barry K."/>
            <person name="Glavina del Rio T."/>
            <person name="Dalin E."/>
            <person name="Tice H."/>
            <person name="Pitluck S."/>
            <person name="Chain P."/>
            <person name="Malfatti S."/>
            <person name="Shin M."/>
            <person name="Vergez L."/>
            <person name="Schmutz J."/>
            <person name="Larimer F."/>
            <person name="Land M."/>
            <person name="Hauser L."/>
            <person name="Kyrpides N."/>
            <person name="Kim E."/>
            <person name="Brettar I."/>
            <person name="Rodrigues J."/>
            <person name="Konstantinidis K."/>
            <person name="Klappenbach J."/>
            <person name="Hofle M."/>
            <person name="Tiedje J."/>
            <person name="Richardson P."/>
        </authorList>
    </citation>
    <scope>NUCLEOTIDE SEQUENCE [LARGE SCALE GENOMIC DNA]</scope>
    <source>
        <strain>OS195</strain>
    </source>
</reference>
<accession>A9L3H7</accession>
<evidence type="ECO:0000255" key="1">
    <source>
        <dbReference type="HAMAP-Rule" id="MF_00016"/>
    </source>
</evidence>
<sequence length="334" mass="37182">MIEADRLIQPQIQAQDESIDRAMRPKMLDEYTGQDDTRAQLKVFIQAAKNRNEALDHMLIYGPPGLGKTTLAMIVANEMGVNIKSTSGPVLEKAGDLAALLTNLESGDVLFIDEIHRLSPVVEEILYPAMEDYQLDIMIGEGPAARSIKLDLPPFTLVGATTRAGALTSPLRARFGIPLRLEFYNIKDLSTIVTRSAQVMELDIDAEGAFEIARRSRGTPRIANRLLRRVRDYAQVKHDGAVTKFVAEHALDLLDVDSEGFDYMDRKLLLAIIDKFMGGPVGLDNLAAAIGEERETIEDVLEPFLIQQGFIQRTPRGRIATVRAYQHFELIKPE</sequence>